<comment type="function">
    <text evidence="2">Involved in the biosynthesis of the 2,6-deoxysugar, dTDP-L-rhodinose, attached to the benzoisochromane quinone chromophore to produce the aglycone antibiotics granaticin and granaticin B. Catalyzes the removal of the hydroxyl group at position C-2 of the hexose ring of dTDP-4-dehydro-6-deoxy-alpha-D-glucopyranose, and the oxidation of the hydroxyl group at position C-3 to form a carbonyl functionality. The product of the reaction, dTDP-2,6-dideoxy-D-glycero-hex-2-enos-4-ulose, is a highly unstable diketosugar, which spontaneously forms dTDP-3,4-didehydro-2,6-dideoxy-alpha-D-glucose.</text>
</comment>
<comment type="catalytic activity">
    <reaction evidence="2">
        <text>dTDP-4-dehydro-6-deoxy-alpha-D-glucose = dTDP-3,4-didehydro-2,6-dideoxy-alpha-D-glucose + H2O</text>
        <dbReference type="Rhea" id="RHEA:47972"/>
        <dbReference type="ChEBI" id="CHEBI:15377"/>
        <dbReference type="ChEBI" id="CHEBI:57649"/>
        <dbReference type="ChEBI" id="CHEBI:84540"/>
        <dbReference type="EC" id="4.2.1.159"/>
    </reaction>
</comment>
<comment type="pathway">
    <text evidence="5">Antibiotic biosynthesis; granaticin biosynthesis.</text>
</comment>
<comment type="subunit">
    <text evidence="1">Homodimer.</text>
</comment>
<comment type="miscellaneous">
    <text evidence="1">Two binding sites (pockets A and B) for the dTDP-sugar ligands have been identified in each subunit. It seems that pocket A represents the active site and pocket B is a vestige of the gene duplication event.</text>
</comment>
<comment type="similarity">
    <text evidence="4">Belongs to the hexose 2,3-dehydratase family.</text>
</comment>
<dbReference type="EC" id="4.2.1.159" evidence="2"/>
<dbReference type="EMBL" id="AJ011500">
    <property type="protein sequence ID" value="CAA09648.1"/>
    <property type="molecule type" value="Genomic_DNA"/>
</dbReference>
<dbReference type="PIR" id="T46532">
    <property type="entry name" value="T46532"/>
</dbReference>
<dbReference type="SMR" id="Q9ZA32"/>
<dbReference type="UniPathway" id="UPA00175"/>
<dbReference type="GO" id="GO:0016829">
    <property type="term" value="F:lyase activity"/>
    <property type="evidence" value="ECO:0007669"/>
    <property type="project" value="UniProtKB-KW"/>
</dbReference>
<dbReference type="GO" id="GO:0017000">
    <property type="term" value="P:antibiotic biosynthetic process"/>
    <property type="evidence" value="ECO:0007669"/>
    <property type="project" value="UniProtKB-KW"/>
</dbReference>
<dbReference type="Gene3D" id="3.90.79.40">
    <property type="entry name" value="EvaA sugar 2,3-dehydratase subunit"/>
    <property type="match status" value="2"/>
</dbReference>
<dbReference type="InterPro" id="IPR005212">
    <property type="entry name" value="EvaA-like"/>
</dbReference>
<dbReference type="InterPro" id="IPR038153">
    <property type="entry name" value="EvaA-like_sf"/>
</dbReference>
<dbReference type="Pfam" id="PF03559">
    <property type="entry name" value="Hexose_dehydrat"/>
    <property type="match status" value="2"/>
</dbReference>
<keyword id="KW-0045">Antibiotic biosynthesis</keyword>
<keyword id="KW-0456">Lyase</keyword>
<protein>
    <recommendedName>
        <fullName evidence="3">dTDP-4-dehydro-6-deoxy-alpha-D-glucopyranose 2,3-dehydratase</fullName>
        <ecNumber evidence="2">4.2.1.159</ecNumber>
    </recommendedName>
    <alternativeName>
        <fullName evidence="3">2,3-dehydratase</fullName>
    </alternativeName>
    <alternativeName>
        <fullName evidence="3">Gra-orf27 protein</fullName>
    </alternativeName>
</protein>
<sequence length="443" mass="49703">MRITDTAGFHAWFAERGAAHRYRITRTPLHDLEGWYTDPASGDVRHRSGRFFSIEGLRYGRQEPDGPAWTQPIIRQPETGVLGVLIKWFDGVPHLLMQAKMEPGNINTLQVSPTVQATFSNYTRVHHGSPVRYIDHFLTPGAGDRVHYDALQSEQGSWFLGKRNRNIVVETTGEIPVHEDFCWVPRPVMAELLRVDNLVNMDSRTVLAGLPDDPGEGSVPRRAVEKPLHDTAALLHWFTGAKVRHRPERTTIPLSRVGGWRRDDDRGEIVHETGRYFRIIGVDVEADSREVTSWSQPMLAPVGRGVVAFVSKEIHGERHLLVQARAEAGTFDAVELGPTVQCNPGNLPDGAPRPPYLDTVLTARPEQVLFDTVHSEEGGRFYHAENRYLVLDGDDVPVDVPEDYTWMTVRQLTRAGRIGNLVDVEARTLLACVRTLPDHGASR</sequence>
<gene>
    <name evidence="6" type="primary">gra-orf27</name>
</gene>
<reference key="1">
    <citation type="journal article" date="1989" name="EMBO J.">
        <title>Structure and deduced function of the granaticin-producing polyketide synthase gene cluster of Streptomyces violaceoruber Tu22.</title>
        <authorList>
            <person name="Sherman D.H."/>
            <person name="Malpartida F."/>
            <person name="Bibb M.J."/>
            <person name="Kieser H.M."/>
            <person name="Bibb M.J."/>
            <person name="Hopwood D.A."/>
        </authorList>
    </citation>
    <scope>NUCLEOTIDE SEQUENCE [GENOMIC DNA]</scope>
    <source>
        <strain evidence="6">Tu22</strain>
    </source>
</reference>
<reference key="2">
    <citation type="journal article" date="1995" name="Mol. Gen. Genet.">
        <title>Identification of Streptomyces violaceoruber Tu22 genes involved in the biosynthesis of granaticin.</title>
        <authorList>
            <person name="Bechthold A."/>
            <person name="Sohng J.K."/>
            <person name="Smith T.M."/>
            <person name="Chu X."/>
            <person name="Floss H.G."/>
        </authorList>
    </citation>
    <scope>NUCLEOTIDE SEQUENCE [GENOMIC DNA]</scope>
    <source>
        <strain evidence="6">Tu22</strain>
    </source>
</reference>
<reference key="3">
    <citation type="journal article" date="1998" name="Chem. Biol.">
        <title>The granaticin biosynthetic gene cluster of Streptomyces violaceoruber Tu22: sequence analysis and expression in a heterologous host.</title>
        <authorList>
            <person name="Ichinose K."/>
            <person name="Bedford D.J."/>
            <person name="Tornus D."/>
            <person name="Bechthold A."/>
            <person name="Bibb M.J."/>
            <person name="Revill W.P."/>
            <person name="Floss H.G."/>
            <person name="Hopwood D.A."/>
        </authorList>
    </citation>
    <scope>NUCLEOTIDE SEQUENCE [GENOMIC DNA]</scope>
    <source>
        <strain evidence="6">Tu22</strain>
    </source>
</reference>
<reference key="4">
    <citation type="journal article" date="1999" name="J. Am. Chem. Soc.">
        <title>Mechanism of the 2-deoxygenation step in the biosynthesis of the deoxyhexose moieties of the antibiotics granaticin and oleandomycin.</title>
        <authorList>
            <person name="Draeger G."/>
            <person name="Park S.-H.H."/>
            <person name="Floss H.G."/>
        </authorList>
    </citation>
    <scope>FUNCTION</scope>
    <scope>CATALYTIC ACTIVITY</scope>
    <scope>PATHWAY</scope>
    <source>
        <strain>Tu22</strain>
    </source>
</reference>
<name>GRA27_STRVN</name>
<feature type="chain" id="PRO_0000444210" description="dTDP-4-dehydro-6-deoxy-alpha-D-glucopyranose 2,3-dehydratase">
    <location>
        <begin position="1"/>
        <end position="443"/>
    </location>
</feature>
<feature type="binding site" description="from pocket A" evidence="1">
    <location>
        <position position="35"/>
    </location>
    <ligand>
        <name>dTDP-4-dehydro-6-deoxy-alpha-D-glucose</name>
        <dbReference type="ChEBI" id="CHEBI:57649"/>
        <label>1</label>
    </ligand>
</feature>
<feature type="binding site" description="from pocket A" evidence="1">
    <location>
        <begin position="118"/>
        <end position="122"/>
    </location>
    <ligand>
        <name>dTDP-4-dehydro-6-deoxy-alpha-D-glucose</name>
        <dbReference type="ChEBI" id="CHEBI:57649"/>
        <label>1</label>
    </ligand>
</feature>
<feature type="binding site" description="from pocket B" evidence="1">
    <location>
        <position position="157"/>
    </location>
    <ligand>
        <name>dTDP-4-dehydro-6-deoxy-alpha-D-glucose</name>
        <dbReference type="ChEBI" id="CHEBI:57649"/>
        <label>2</label>
    </ligand>
</feature>
<feature type="binding site" description="from pocket B" evidence="1">
    <location>
        <position position="260"/>
    </location>
    <ligand>
        <name>dTDP-4-dehydro-6-deoxy-alpha-D-glucose</name>
        <dbReference type="ChEBI" id="CHEBI:57649"/>
        <label>2</label>
    </ligand>
</feature>
<feature type="binding site" description="from pocket B" evidence="1">
    <location>
        <position position="325"/>
    </location>
    <ligand>
        <name>dTDP-4-dehydro-6-deoxy-alpha-D-glucose</name>
        <dbReference type="ChEBI" id="CHEBI:57649"/>
        <label>2</label>
    </ligand>
</feature>
<feature type="binding site" description="from pocket B" evidence="1">
    <location>
        <begin position="341"/>
        <end position="343"/>
    </location>
    <ligand>
        <name>dTDP-4-dehydro-6-deoxy-alpha-D-glucose</name>
        <dbReference type="ChEBI" id="CHEBI:57649"/>
        <label>2</label>
    </ligand>
</feature>
<feature type="binding site" description="from pocket B" evidence="1">
    <location>
        <begin position="346"/>
        <end position="347"/>
    </location>
    <ligand>
        <name>dTDP-4-dehydro-6-deoxy-alpha-D-glucose</name>
        <dbReference type="ChEBI" id="CHEBI:57649"/>
        <label>2</label>
    </ligand>
</feature>
<feature type="binding site" description="from pocket A" evidence="1">
    <location>
        <begin position="377"/>
        <end position="380"/>
    </location>
    <ligand>
        <name>dTDP-4-dehydro-6-deoxy-alpha-D-glucose</name>
        <dbReference type="ChEBI" id="CHEBI:57649"/>
        <label>1</label>
    </ligand>
</feature>
<evidence type="ECO:0000250" key="1">
    <source>
        <dbReference type="UniProtKB" id="O52793"/>
    </source>
</evidence>
<evidence type="ECO:0000269" key="2">
    <source ref="4"/>
</evidence>
<evidence type="ECO:0000303" key="3">
    <source ref="4"/>
</evidence>
<evidence type="ECO:0000305" key="4"/>
<evidence type="ECO:0000305" key="5">
    <source ref="4"/>
</evidence>
<evidence type="ECO:0000312" key="6">
    <source>
        <dbReference type="EMBL" id="CAA09648.1"/>
    </source>
</evidence>
<proteinExistence type="evidence at protein level"/>
<accession>Q9ZA32</accession>
<organism>
    <name type="scientific">Streptomyces violaceoruber</name>
    <dbReference type="NCBI Taxonomy" id="1935"/>
    <lineage>
        <taxon>Bacteria</taxon>
        <taxon>Bacillati</taxon>
        <taxon>Actinomycetota</taxon>
        <taxon>Actinomycetes</taxon>
        <taxon>Kitasatosporales</taxon>
        <taxon>Streptomycetaceae</taxon>
        <taxon>Streptomyces</taxon>
        <taxon>Streptomyces violaceoruber group</taxon>
    </lineage>
</organism>